<accession>P14893</accession>
<accession>Q2T9Y8</accession>
<sequence length="373" mass="42220">MAGWSCLVTGGGGFLGQRIICLLVEEKDLQEIRVLDKVFRPEVREEFSKLQSKIKLTLLEGDILDEQCLKGACQGTSVVIHTASVIDVRNAVPRETIMNVNVKGTQLLLEACVQASVPVFIHTSTIEVAGPNSYREIIQDGREEEHHESAWSSPYPYSKKLAEKAVLGANGWALKNGGTLYTCALRPMYIYGEGSPFLSAYMHGALNNNGILTNHCKFSRVNPVYVGNVAWAHILALRALRDPKKVPNIQGQFYYISDDTPHQSYDDLNYTLSKEWGFCLDSRMSLPISLQYWLAFLLEIVSFLLSPIYKYNPCFNRHLVTLSNSVFTFSYKKAQRDLGYEPLYTWEEAKQKTKEWIGSLVKQHKETLKTKIH</sequence>
<evidence type="ECO:0000250" key="1"/>
<evidence type="ECO:0000255" key="2"/>
<evidence type="ECO:0000305" key="3"/>
<gene>
    <name type="primary">HSD3B</name>
</gene>
<proteinExistence type="evidence at protein level"/>
<name>3BHS_BOVIN</name>
<comment type="function">
    <text>3-beta-HSD is a bifunctional enzyme, that catalyzes the oxidative conversion of Delta(5)-ene-3-beta-hydroxy steroid, and the oxidative conversion of ketosteroids. The 3-beta-HSD enzymatic system plays a crucial role in the biosynthesis of all classes of hormonal steroids.</text>
</comment>
<comment type="catalytic activity">
    <reaction>
        <text>a 3beta-hydroxy-Delta(5)-steroid + NAD(+) = a 3-oxo-Delta(5)-steroid + NADH + H(+)</text>
        <dbReference type="Rhea" id="RHEA:24076"/>
        <dbReference type="ChEBI" id="CHEBI:1722"/>
        <dbReference type="ChEBI" id="CHEBI:15378"/>
        <dbReference type="ChEBI" id="CHEBI:47907"/>
        <dbReference type="ChEBI" id="CHEBI:57540"/>
        <dbReference type="ChEBI" id="CHEBI:57945"/>
        <dbReference type="EC" id="1.1.1.145"/>
    </reaction>
</comment>
<comment type="catalytic activity">
    <reaction>
        <text>a 3-oxo-Delta(5)-steroid = a 3-oxo-Delta(4)-steroid</text>
        <dbReference type="Rhea" id="RHEA:14709"/>
        <dbReference type="ChEBI" id="CHEBI:47907"/>
        <dbReference type="ChEBI" id="CHEBI:47909"/>
        <dbReference type="EC" id="5.3.3.1"/>
    </reaction>
</comment>
<comment type="pathway">
    <text>Lipid metabolism; steroid biosynthesis.</text>
</comment>
<comment type="subcellular location">
    <subcellularLocation>
        <location>Endoplasmic reticulum membrane</location>
        <topology>Single-pass membrane protein</topology>
    </subcellularLocation>
    <subcellularLocation>
        <location>Mitochondrion membrane</location>
        <topology>Single-pass membrane protein</topology>
    </subcellularLocation>
</comment>
<comment type="similarity">
    <text evidence="3">Belongs to the 3-beta-HSD family.</text>
</comment>
<reference key="1">
    <citation type="journal article" date="1989" name="FEBS Lett.">
        <title>Molecular cloning, cDNA structure and predicted amino acid sequence of bovine 3 beta-hydroxy-5-ene steroid dehydrogenase/delta 5-delta 4 isomerase.</title>
        <authorList>
            <person name="Zhao H.-F."/>
            <person name="Simard J."/>
            <person name="Labrie C."/>
            <person name="Breton N."/>
            <person name="Rheaume E."/>
            <person name="Luu-The V."/>
            <person name="Labrie F."/>
        </authorList>
    </citation>
    <scope>NUCLEOTIDE SEQUENCE [MRNA]</scope>
    <source>
        <tissue>Ovary</tissue>
    </source>
</reference>
<reference key="2">
    <citation type="submission" date="2005-12" db="EMBL/GenBank/DDBJ databases">
        <authorList>
            <consortium name="NIH - Mammalian Gene Collection (MGC) project"/>
        </authorList>
    </citation>
    <scope>NUCLEOTIDE SEQUENCE [LARGE SCALE MRNA]</scope>
    <source>
        <strain>Crossbred X Angus</strain>
        <tissue>Liver</tissue>
    </source>
</reference>
<reference key="3">
    <citation type="journal article" date="1991" name="Biochemistry">
        <title>Isolation and amino acid sequence analysis of bovine adrenal 3 beta-hydroxysteroid dehydrogenase/steroid isomerase.</title>
        <authorList>
            <person name="Rutherfurd K.J."/>
            <person name="Chen S."/>
            <person name="Shively J.E."/>
        </authorList>
    </citation>
    <scope>PARTIAL PROTEIN SEQUENCE</scope>
    <source>
        <tissue>Adrenal gland</tissue>
    </source>
</reference>
<dbReference type="EC" id="1.1.1.145"/>
<dbReference type="EC" id="5.3.3.1"/>
<dbReference type="EMBL" id="X17614">
    <property type="protein sequence ID" value="CAA35615.1"/>
    <property type="molecule type" value="mRNA"/>
</dbReference>
<dbReference type="EMBL" id="BC111203">
    <property type="protein sequence ID" value="AAI11204.2"/>
    <property type="molecule type" value="mRNA"/>
</dbReference>
<dbReference type="PIR" id="S07102">
    <property type="entry name" value="DEBOHS"/>
</dbReference>
<dbReference type="RefSeq" id="NP_776768.1">
    <property type="nucleotide sequence ID" value="NM_174343.3"/>
</dbReference>
<dbReference type="SMR" id="P14893"/>
<dbReference type="FunCoup" id="P14893">
    <property type="interactions" value="36"/>
</dbReference>
<dbReference type="STRING" id="9913.ENSBTAP00000010992"/>
<dbReference type="PaxDb" id="9913-ENSBTAP00000010992"/>
<dbReference type="Ensembl" id="ENSBTAT00000106839.1">
    <property type="protein sequence ID" value="ENSBTAP00000086603.1"/>
    <property type="gene ID" value="ENSBTAG00000006769.7"/>
</dbReference>
<dbReference type="GeneID" id="281824"/>
<dbReference type="KEGG" id="bta:281824"/>
<dbReference type="CTD" id="3283"/>
<dbReference type="VEuPathDB" id="HostDB:ENSBTAG00000006769"/>
<dbReference type="eggNOG" id="KOG1430">
    <property type="taxonomic scope" value="Eukaryota"/>
</dbReference>
<dbReference type="GeneTree" id="ENSGT00940000155444"/>
<dbReference type="HOGENOM" id="CLU_007383_6_3_1"/>
<dbReference type="InParanoid" id="P14893"/>
<dbReference type="OMA" id="GGKFYFV"/>
<dbReference type="OrthoDB" id="1925334at2759"/>
<dbReference type="TreeFam" id="TF343138"/>
<dbReference type="Reactome" id="R-BTA-193048">
    <property type="pathway name" value="Androgen biosynthesis"/>
</dbReference>
<dbReference type="Reactome" id="R-BTA-193993">
    <property type="pathway name" value="Mineralocorticoid biosynthesis"/>
</dbReference>
<dbReference type="Reactome" id="R-BTA-194002">
    <property type="pathway name" value="Glucocorticoid biosynthesis"/>
</dbReference>
<dbReference type="UniPathway" id="UPA00062"/>
<dbReference type="Proteomes" id="UP000009136">
    <property type="component" value="Chromosome 3"/>
</dbReference>
<dbReference type="Bgee" id="ENSBTAG00000006769">
    <property type="expression patterns" value="Expressed in diaphragm and 57 other cell types or tissues"/>
</dbReference>
<dbReference type="GO" id="GO:0005737">
    <property type="term" value="C:cytoplasm"/>
    <property type="evidence" value="ECO:0000318"/>
    <property type="project" value="GO_Central"/>
</dbReference>
<dbReference type="GO" id="GO:0043231">
    <property type="term" value="C:intracellular membrane-bounded organelle"/>
    <property type="evidence" value="ECO:0000318"/>
    <property type="project" value="GO_Central"/>
</dbReference>
<dbReference type="GO" id="GO:0031966">
    <property type="term" value="C:mitochondrial membrane"/>
    <property type="evidence" value="ECO:0007669"/>
    <property type="project" value="UniProtKB-SubCell"/>
</dbReference>
<dbReference type="GO" id="GO:0030868">
    <property type="term" value="C:smooth endoplasmic reticulum membrane"/>
    <property type="evidence" value="ECO:0000314"/>
    <property type="project" value="UniProtKB"/>
</dbReference>
<dbReference type="GO" id="GO:0003854">
    <property type="term" value="F:3-beta-hydroxy-Delta5-steroid dehydrogenase (NAD+) activity"/>
    <property type="evidence" value="ECO:0007669"/>
    <property type="project" value="UniProtKB-EC"/>
</dbReference>
<dbReference type="GO" id="GO:0016616">
    <property type="term" value="F:oxidoreductase activity, acting on the CH-OH group of donors, NAD or NADP as acceptor"/>
    <property type="evidence" value="ECO:0000318"/>
    <property type="project" value="GO_Central"/>
</dbReference>
<dbReference type="GO" id="GO:0004769">
    <property type="term" value="F:steroid Delta-isomerase activity"/>
    <property type="evidence" value="ECO:0007669"/>
    <property type="project" value="UniProtKB-EC"/>
</dbReference>
<dbReference type="GO" id="GO:0008207">
    <property type="term" value="P:C21-steroid hormone metabolic process"/>
    <property type="evidence" value="ECO:0000318"/>
    <property type="project" value="GO_Central"/>
</dbReference>
<dbReference type="GO" id="GO:0006694">
    <property type="term" value="P:steroid biosynthetic process"/>
    <property type="evidence" value="ECO:0000318"/>
    <property type="project" value="GO_Central"/>
</dbReference>
<dbReference type="FunFam" id="3.40.50.720:FF:000220">
    <property type="entry name" value="3 beta-hydroxysteroid dehydrogenase/Delta 5--&gt;4-isomerase type 1"/>
    <property type="match status" value="1"/>
</dbReference>
<dbReference type="Gene3D" id="3.40.50.720">
    <property type="entry name" value="NAD(P)-binding Rossmann-like Domain"/>
    <property type="match status" value="1"/>
</dbReference>
<dbReference type="InterPro" id="IPR002225">
    <property type="entry name" value="3Beta_OHSteriod_DH/Estase"/>
</dbReference>
<dbReference type="InterPro" id="IPR050177">
    <property type="entry name" value="Lipid_A_modif_metabolic_enz"/>
</dbReference>
<dbReference type="InterPro" id="IPR036291">
    <property type="entry name" value="NAD(P)-bd_dom_sf"/>
</dbReference>
<dbReference type="PANTHER" id="PTHR43245">
    <property type="entry name" value="BIFUNCTIONAL POLYMYXIN RESISTANCE PROTEIN ARNA"/>
    <property type="match status" value="1"/>
</dbReference>
<dbReference type="PANTHER" id="PTHR43245:SF51">
    <property type="entry name" value="SHORT CHAIN DEHYDROGENASE_REDUCTASE FAMILY 42E, MEMBER 2"/>
    <property type="match status" value="1"/>
</dbReference>
<dbReference type="Pfam" id="PF01073">
    <property type="entry name" value="3Beta_HSD"/>
    <property type="match status" value="1"/>
</dbReference>
<dbReference type="SUPFAM" id="SSF51735">
    <property type="entry name" value="NAD(P)-binding Rossmann-fold domains"/>
    <property type="match status" value="1"/>
</dbReference>
<feature type="chain" id="PRO_0000087771" description="3 beta-hydroxysteroid dehydrogenase/Delta 5--&gt;4-isomerase">
    <location>
        <begin position="1"/>
        <end position="373"/>
    </location>
</feature>
<feature type="transmembrane region" description="Helical" evidence="2">
    <location>
        <begin position="288"/>
        <end position="308"/>
    </location>
</feature>
<feature type="active site" description="Proton acceptor" evidence="1">
    <location>
        <position position="155"/>
    </location>
</feature>
<feature type="binding site" evidence="1">
    <location>
        <position position="159"/>
    </location>
    <ligand>
        <name>NAD(+)</name>
        <dbReference type="ChEBI" id="CHEBI:57540"/>
    </ligand>
</feature>
<organism>
    <name type="scientific">Bos taurus</name>
    <name type="common">Bovine</name>
    <dbReference type="NCBI Taxonomy" id="9913"/>
    <lineage>
        <taxon>Eukaryota</taxon>
        <taxon>Metazoa</taxon>
        <taxon>Chordata</taxon>
        <taxon>Craniata</taxon>
        <taxon>Vertebrata</taxon>
        <taxon>Euteleostomi</taxon>
        <taxon>Mammalia</taxon>
        <taxon>Eutheria</taxon>
        <taxon>Laurasiatheria</taxon>
        <taxon>Artiodactyla</taxon>
        <taxon>Ruminantia</taxon>
        <taxon>Pecora</taxon>
        <taxon>Bovidae</taxon>
        <taxon>Bovinae</taxon>
        <taxon>Bos</taxon>
    </lineage>
</organism>
<protein>
    <recommendedName>
        <fullName>3 beta-hydroxysteroid dehydrogenase/Delta 5--&gt;4-isomerase</fullName>
        <shortName>3-beta-HSD</shortName>
    </recommendedName>
    <domain>
        <recommendedName>
            <fullName>3-beta-hydroxy-Delta(5)-steroid dehydrogenase</fullName>
            <ecNumber>1.1.1.145</ecNumber>
        </recommendedName>
        <alternativeName>
            <fullName>3-beta-hydroxy-5-ene steroid dehydrogenase</fullName>
        </alternativeName>
        <alternativeName>
            <fullName>Progesterone reductase</fullName>
        </alternativeName>
    </domain>
    <domain>
        <recommendedName>
            <fullName>Steroid Delta-isomerase</fullName>
            <ecNumber>5.3.3.1</ecNumber>
        </recommendedName>
        <alternativeName>
            <fullName>Delta-5-3-ketosteroid isomerase</fullName>
        </alternativeName>
    </domain>
</protein>
<keyword id="KW-0903">Direct protein sequencing</keyword>
<keyword id="KW-0256">Endoplasmic reticulum</keyword>
<keyword id="KW-0413">Isomerase</keyword>
<keyword id="KW-0472">Membrane</keyword>
<keyword id="KW-0496">Mitochondrion</keyword>
<keyword id="KW-0511">Multifunctional enzyme</keyword>
<keyword id="KW-0520">NAD</keyword>
<keyword id="KW-0560">Oxidoreductase</keyword>
<keyword id="KW-1185">Reference proteome</keyword>
<keyword id="KW-0755">Steroidogenesis</keyword>
<keyword id="KW-0812">Transmembrane</keyword>
<keyword id="KW-1133">Transmembrane helix</keyword>